<reference key="1">
    <citation type="submission" date="2007-02" db="EMBL/GenBank/DDBJ databases">
        <title>Complete sequence of chromosome of Yersinia pestis Pestoides F.</title>
        <authorList>
            <consortium name="US DOE Joint Genome Institute"/>
            <person name="Copeland A."/>
            <person name="Lucas S."/>
            <person name="Lapidus A."/>
            <person name="Barry K."/>
            <person name="Detter J.C."/>
            <person name="Glavina del Rio T."/>
            <person name="Hammon N."/>
            <person name="Israni S."/>
            <person name="Dalin E."/>
            <person name="Tice H."/>
            <person name="Pitluck S."/>
            <person name="Di Bartolo G."/>
            <person name="Chain P."/>
            <person name="Malfatti S."/>
            <person name="Shin M."/>
            <person name="Vergez L."/>
            <person name="Schmutz J."/>
            <person name="Larimer F."/>
            <person name="Land M."/>
            <person name="Hauser L."/>
            <person name="Worsham P."/>
            <person name="Chu M."/>
            <person name="Bearden S."/>
            <person name="Garcia E."/>
            <person name="Richardson P."/>
        </authorList>
    </citation>
    <scope>NUCLEOTIDE SEQUENCE [LARGE SCALE GENOMIC DNA]</scope>
    <source>
        <strain>Pestoides F</strain>
    </source>
</reference>
<sequence>MKPAARRRARECAVQALYSWQLSKNDIADVELQFLSEQDVKDVDIAYFRELLSGVAVNAASLDALMAPFLSRQLEELGQVERAVLRIALFELSKRDDVPYKVAINEAIELAKTFGAEDSHKFVNGVLDKVAPTVRKRK</sequence>
<organism>
    <name type="scientific">Yersinia pestis (strain Pestoides F)</name>
    <dbReference type="NCBI Taxonomy" id="386656"/>
    <lineage>
        <taxon>Bacteria</taxon>
        <taxon>Pseudomonadati</taxon>
        <taxon>Pseudomonadota</taxon>
        <taxon>Gammaproteobacteria</taxon>
        <taxon>Enterobacterales</taxon>
        <taxon>Yersiniaceae</taxon>
        <taxon>Yersinia</taxon>
    </lineage>
</organism>
<comment type="function">
    <text evidence="1">Involved in transcription antitermination. Required for transcription of ribosomal RNA (rRNA) genes. Binds specifically to the boxA antiterminator sequence of the ribosomal RNA (rrn) operons.</text>
</comment>
<comment type="similarity">
    <text evidence="1">Belongs to the NusB family.</text>
</comment>
<dbReference type="EMBL" id="CP000668">
    <property type="protein sequence ID" value="ABP41178.1"/>
    <property type="molecule type" value="Genomic_DNA"/>
</dbReference>
<dbReference type="RefSeq" id="WP_002208665.1">
    <property type="nucleotide sequence ID" value="NZ_CP009715.1"/>
</dbReference>
<dbReference type="SMR" id="A4TPG6"/>
<dbReference type="GeneID" id="96664444"/>
<dbReference type="KEGG" id="ypp:YPDSF_2816"/>
<dbReference type="PATRIC" id="fig|386656.14.peg.74"/>
<dbReference type="GO" id="GO:0005829">
    <property type="term" value="C:cytosol"/>
    <property type="evidence" value="ECO:0007669"/>
    <property type="project" value="TreeGrafter"/>
</dbReference>
<dbReference type="GO" id="GO:0003723">
    <property type="term" value="F:RNA binding"/>
    <property type="evidence" value="ECO:0007669"/>
    <property type="project" value="UniProtKB-UniRule"/>
</dbReference>
<dbReference type="GO" id="GO:0006353">
    <property type="term" value="P:DNA-templated transcription termination"/>
    <property type="evidence" value="ECO:0007669"/>
    <property type="project" value="UniProtKB-UniRule"/>
</dbReference>
<dbReference type="GO" id="GO:0031564">
    <property type="term" value="P:transcription antitermination"/>
    <property type="evidence" value="ECO:0007669"/>
    <property type="project" value="UniProtKB-KW"/>
</dbReference>
<dbReference type="CDD" id="cd00619">
    <property type="entry name" value="Terminator_NusB"/>
    <property type="match status" value="1"/>
</dbReference>
<dbReference type="FunFam" id="1.10.940.10:FF:000001">
    <property type="entry name" value="Transcription antitermination factor NusB"/>
    <property type="match status" value="1"/>
</dbReference>
<dbReference type="Gene3D" id="1.10.940.10">
    <property type="entry name" value="NusB-like"/>
    <property type="match status" value="1"/>
</dbReference>
<dbReference type="HAMAP" id="MF_00073">
    <property type="entry name" value="NusB"/>
    <property type="match status" value="1"/>
</dbReference>
<dbReference type="InterPro" id="IPR035926">
    <property type="entry name" value="NusB-like_sf"/>
</dbReference>
<dbReference type="InterPro" id="IPR011605">
    <property type="entry name" value="NusB_fam"/>
</dbReference>
<dbReference type="InterPro" id="IPR006027">
    <property type="entry name" value="NusB_RsmB_TIM44"/>
</dbReference>
<dbReference type="NCBIfam" id="TIGR01951">
    <property type="entry name" value="nusB"/>
    <property type="match status" value="1"/>
</dbReference>
<dbReference type="PANTHER" id="PTHR11078:SF3">
    <property type="entry name" value="ANTITERMINATION NUSB DOMAIN-CONTAINING PROTEIN"/>
    <property type="match status" value="1"/>
</dbReference>
<dbReference type="PANTHER" id="PTHR11078">
    <property type="entry name" value="N UTILIZATION SUBSTANCE PROTEIN B-RELATED"/>
    <property type="match status" value="1"/>
</dbReference>
<dbReference type="Pfam" id="PF01029">
    <property type="entry name" value="NusB"/>
    <property type="match status" value="1"/>
</dbReference>
<dbReference type="SUPFAM" id="SSF48013">
    <property type="entry name" value="NusB-like"/>
    <property type="match status" value="1"/>
</dbReference>
<protein>
    <recommendedName>
        <fullName evidence="1">Transcription antitermination protein NusB</fullName>
    </recommendedName>
    <alternativeName>
        <fullName evidence="1">Antitermination factor NusB</fullName>
    </alternativeName>
</protein>
<evidence type="ECO:0000255" key="1">
    <source>
        <dbReference type="HAMAP-Rule" id="MF_00073"/>
    </source>
</evidence>
<feature type="chain" id="PRO_1000023788" description="Transcription antitermination protein NusB">
    <location>
        <begin position="1"/>
        <end position="138"/>
    </location>
</feature>
<proteinExistence type="inferred from homology"/>
<keyword id="KW-0694">RNA-binding</keyword>
<keyword id="KW-0804">Transcription</keyword>
<keyword id="KW-0889">Transcription antitermination</keyword>
<keyword id="KW-0805">Transcription regulation</keyword>
<gene>
    <name evidence="1" type="primary">nusB</name>
    <name type="ordered locus">YPDSF_2816</name>
</gene>
<name>NUSB_YERPP</name>
<accession>A4TPG6</accession>